<comment type="function">
    <text evidence="8">Subunit of the tubulin polyglutamylase complex (TPGC). The complex mediates cilia and flagella polyglutamylation which is essential for their biogenesis and motility.</text>
</comment>
<comment type="subunit">
    <text evidence="1 4 8">Part of the neuronal tubulin polyglutamylase complex which contains TPGS1, TPGS2, TTLL1, LRRC49 and NICN1 (Probable). Interacts with PCM1; TTLL1, TPGS1, TPGS2 and LRRC49 (PubMed:34782749).</text>
</comment>
<comment type="subcellular location">
    <subcellularLocation>
        <location evidence="4">Cytoplasm</location>
        <location evidence="4">Cytoskeleton</location>
    </subcellularLocation>
    <subcellularLocation>
        <location evidence="4">Cytoplasm</location>
        <location evidence="4">Cytoskeleton</location>
        <location evidence="4">Microtubule organizing center</location>
        <location evidence="4">Centrosome</location>
        <location evidence="4">Centriolar satellite</location>
    </subcellularLocation>
    <text evidence="4">Associated with microtubules.</text>
</comment>
<comment type="alternative products">
    <event type="alternative splicing"/>
    <isoform>
        <id>Q8IUZ0-1</id>
        <name>1</name>
        <sequence type="displayed"/>
    </isoform>
    <isoform>
        <id>Q8IUZ0-2</id>
        <name>2</name>
        <sequence type="described" ref="VSP_044747"/>
    </isoform>
    <isoform>
        <id>Q8IUZ0-3</id>
        <name>3</name>
        <sequence type="described" ref="VSP_046801"/>
    </isoform>
    <isoform>
        <id>Q8IUZ0-4</id>
        <name>4</name>
        <sequence type="described" ref="VSP_055653"/>
    </isoform>
</comment>
<gene>
    <name evidence="9" type="primary">LRRC49</name>
    <name evidence="6" type="synonym">CSTPP2</name>
</gene>
<proteinExistence type="evidence at protein level"/>
<evidence type="ECO:0000250" key="1"/>
<evidence type="ECO:0000255" key="2"/>
<evidence type="ECO:0000256" key="3">
    <source>
        <dbReference type="SAM" id="MobiDB-lite"/>
    </source>
</evidence>
<evidence type="ECO:0000269" key="4">
    <source>
    </source>
</evidence>
<evidence type="ECO:0000303" key="5">
    <source>
    </source>
</evidence>
<evidence type="ECO:0000303" key="6">
    <source>
    </source>
</evidence>
<evidence type="ECO:0000305" key="7"/>
<evidence type="ECO:0000305" key="8">
    <source>
    </source>
</evidence>
<evidence type="ECO:0000312" key="9">
    <source>
        <dbReference type="HGNC" id="HGNC:25965"/>
    </source>
</evidence>
<feature type="chain" id="PRO_0000233034" description="Leucine-rich repeat-containing protein 49">
    <location>
        <begin position="1"/>
        <end position="686"/>
    </location>
</feature>
<feature type="repeat" description="LRR 1">
    <location>
        <begin position="113"/>
        <end position="134"/>
    </location>
</feature>
<feature type="repeat" description="LRR 2">
    <location>
        <begin position="135"/>
        <end position="156"/>
    </location>
</feature>
<feature type="repeat" description="LRR 3">
    <location>
        <begin position="157"/>
        <end position="178"/>
    </location>
</feature>
<feature type="repeat" description="LRR 4">
    <location>
        <begin position="179"/>
        <end position="200"/>
    </location>
</feature>
<feature type="repeat" description="LRR 5">
    <location>
        <begin position="201"/>
        <end position="222"/>
    </location>
</feature>
<feature type="repeat" description="LRR 6">
    <location>
        <begin position="223"/>
        <end position="244"/>
    </location>
</feature>
<feature type="repeat" description="LRR 7">
    <location>
        <begin position="245"/>
        <end position="266"/>
    </location>
</feature>
<feature type="domain" description="LRRCT">
    <location>
        <begin position="279"/>
        <end position="317"/>
    </location>
</feature>
<feature type="region of interest" description="Disordered" evidence="3">
    <location>
        <begin position="360"/>
        <end position="388"/>
    </location>
</feature>
<feature type="coiled-coil region" evidence="2">
    <location>
        <begin position="303"/>
        <end position="341"/>
    </location>
</feature>
<feature type="splice variant" id="VSP_046801" description="In isoform 3." evidence="7">
    <original>MIPGKYRSVSGRAANNVNCGLHLVIQTSSLPEKNKVEFKLNKDTSSFPGRLLQHDLERNYSSRQ</original>
    <variation>MRSITQGACRFIWEDKGYIS</variation>
    <location>
        <begin position="1"/>
        <end position="64"/>
    </location>
</feature>
<feature type="splice variant" id="VSP_055653" description="In isoform 4." evidence="5">
    <original>MIPGKYRSVSGRAANN</original>
    <variation>MDCQAE</variation>
    <location>
        <begin position="1"/>
        <end position="16"/>
    </location>
</feature>
<feature type="splice variant" id="VSP_044747" description="In isoform 2." evidence="5">
    <original>N</original>
    <variation>NKVRFK</variation>
    <location>
        <position position="34"/>
    </location>
</feature>
<feature type="sequence conflict" description="In Ref. 1; BAG53933." evidence="7" ref="1">
    <original>S</original>
    <variation>L</variation>
    <location>
        <position position="28"/>
    </location>
</feature>
<feature type="sequence conflict" description="In Ref. 1; BAA90984." evidence="7" ref="1">
    <original>I</original>
    <variation>T</variation>
    <location>
        <position position="274"/>
    </location>
</feature>
<feature type="sequence conflict" description="In Ref. 1; BAG53933." evidence="7" ref="1">
    <location>
        <position position="352"/>
    </location>
</feature>
<feature type="sequence conflict" description="In Ref. 1; BAA90984 and 4; AAH37982." evidence="7" ref="1 4">
    <location>
        <position position="354"/>
    </location>
</feature>
<feature type="sequence conflict" description="In Ref. 1; BAH12102." evidence="7" ref="1">
    <original>A</original>
    <variation>T</variation>
    <location>
        <position position="488"/>
    </location>
</feature>
<dbReference type="EMBL" id="AK000163">
    <property type="protein sequence ID" value="BAA90984.1"/>
    <property type="molecule type" value="mRNA"/>
</dbReference>
<dbReference type="EMBL" id="AK123672">
    <property type="protein sequence ID" value="BAG53933.1"/>
    <property type="molecule type" value="mRNA"/>
</dbReference>
<dbReference type="EMBL" id="AK295547">
    <property type="protein sequence ID" value="BAH12102.1"/>
    <property type="molecule type" value="mRNA"/>
</dbReference>
<dbReference type="EMBL" id="AC013752">
    <property type="status" value="NOT_ANNOTATED_CDS"/>
    <property type="molecule type" value="Genomic_DNA"/>
</dbReference>
<dbReference type="EMBL" id="AC084703">
    <property type="status" value="NOT_ANNOTATED_CDS"/>
    <property type="molecule type" value="Genomic_DNA"/>
</dbReference>
<dbReference type="EMBL" id="AC090868">
    <property type="status" value="NOT_ANNOTATED_CDS"/>
    <property type="molecule type" value="Genomic_DNA"/>
</dbReference>
<dbReference type="EMBL" id="CH471082">
    <property type="protein sequence ID" value="EAW77864.1"/>
    <property type="molecule type" value="Genomic_DNA"/>
</dbReference>
<dbReference type="EMBL" id="BC037982">
    <property type="protein sequence ID" value="AAH37982.1"/>
    <property type="molecule type" value="mRNA"/>
</dbReference>
<dbReference type="CCDS" id="CCDS32282.1">
    <molecule id="Q8IUZ0-1"/>
</dbReference>
<dbReference type="CCDS" id="CCDS55971.1">
    <molecule id="Q8IUZ0-3"/>
</dbReference>
<dbReference type="CCDS" id="CCDS58376.1">
    <molecule id="Q8IUZ0-2"/>
</dbReference>
<dbReference type="CCDS" id="CCDS61694.1">
    <molecule id="Q8IUZ0-4"/>
</dbReference>
<dbReference type="RefSeq" id="NP_001185946.1">
    <molecule id="Q8IUZ0-2"/>
    <property type="nucleotide sequence ID" value="NM_001199017.3"/>
</dbReference>
<dbReference type="RefSeq" id="NP_001185947.1">
    <molecule id="Q8IUZ0-3"/>
    <property type="nucleotide sequence ID" value="NM_001199018.3"/>
</dbReference>
<dbReference type="RefSeq" id="NP_001271286.1">
    <molecule id="Q8IUZ0-4"/>
    <property type="nucleotide sequence ID" value="NM_001284357.2"/>
</dbReference>
<dbReference type="RefSeq" id="NP_060161.2">
    <molecule id="Q8IUZ0-1"/>
    <property type="nucleotide sequence ID" value="NM_017691.5"/>
</dbReference>
<dbReference type="RefSeq" id="XP_011520017.1">
    <property type="nucleotide sequence ID" value="XM_011521715.2"/>
</dbReference>
<dbReference type="RefSeq" id="XP_016877847.1">
    <property type="nucleotide sequence ID" value="XM_017022358.1"/>
</dbReference>
<dbReference type="SMR" id="Q8IUZ0"/>
<dbReference type="BioGRID" id="120190">
    <property type="interactions" value="105"/>
</dbReference>
<dbReference type="ComplexPortal" id="CPX-2572">
    <property type="entry name" value="Tubulin polyglutamylase complex"/>
</dbReference>
<dbReference type="FunCoup" id="Q8IUZ0">
    <property type="interactions" value="734"/>
</dbReference>
<dbReference type="IntAct" id="Q8IUZ0">
    <property type="interactions" value="54"/>
</dbReference>
<dbReference type="MINT" id="Q8IUZ0"/>
<dbReference type="STRING" id="9606.ENSP00000453273"/>
<dbReference type="iPTMnet" id="Q8IUZ0"/>
<dbReference type="PhosphoSitePlus" id="Q8IUZ0"/>
<dbReference type="BioMuta" id="LRRC49"/>
<dbReference type="DMDM" id="269849615"/>
<dbReference type="jPOST" id="Q8IUZ0"/>
<dbReference type="MassIVE" id="Q8IUZ0"/>
<dbReference type="PaxDb" id="9606-ENSP00000453273"/>
<dbReference type="PeptideAtlas" id="Q8IUZ0"/>
<dbReference type="ProteomicsDB" id="25674"/>
<dbReference type="ProteomicsDB" id="34036"/>
<dbReference type="ProteomicsDB" id="40007"/>
<dbReference type="ProteomicsDB" id="70631">
    <molecule id="Q8IUZ0-1"/>
</dbReference>
<dbReference type="Pumba" id="Q8IUZ0"/>
<dbReference type="Antibodypedia" id="42973">
    <property type="antibodies" value="38 antibodies from 13 providers"/>
</dbReference>
<dbReference type="DNASU" id="54839"/>
<dbReference type="Ensembl" id="ENST00000260382.10">
    <molecule id="Q8IUZ0-1"/>
    <property type="protein sequence ID" value="ENSP00000260382.4"/>
    <property type="gene ID" value="ENSG00000137821.12"/>
</dbReference>
<dbReference type="Ensembl" id="ENST00000443425.6">
    <molecule id="Q8IUZ0-3"/>
    <property type="protein sequence ID" value="ENSP00000414065.2"/>
    <property type="gene ID" value="ENSG00000137821.12"/>
</dbReference>
<dbReference type="Ensembl" id="ENST00000544974.6">
    <molecule id="Q8IUZ0-4"/>
    <property type="protein sequence ID" value="ENSP00000439600.2"/>
    <property type="gene ID" value="ENSG00000137821.12"/>
</dbReference>
<dbReference type="Ensembl" id="ENST00000560369.5">
    <molecule id="Q8IUZ0-2"/>
    <property type="protein sequence ID" value="ENSP00000453273.1"/>
    <property type="gene ID" value="ENSG00000137821.12"/>
</dbReference>
<dbReference type="GeneID" id="54839"/>
<dbReference type="KEGG" id="hsa:54839"/>
<dbReference type="MANE-Select" id="ENST00000260382.10">
    <property type="protein sequence ID" value="ENSP00000260382.4"/>
    <property type="RefSeq nucleotide sequence ID" value="NM_017691.5"/>
    <property type="RefSeq protein sequence ID" value="NP_060161.2"/>
</dbReference>
<dbReference type="UCSC" id="uc002asu.5">
    <molecule id="Q8IUZ0-1"/>
    <property type="organism name" value="human"/>
</dbReference>
<dbReference type="AGR" id="HGNC:25965"/>
<dbReference type="CTD" id="54839"/>
<dbReference type="DisGeNET" id="54839"/>
<dbReference type="GeneCards" id="LRRC49"/>
<dbReference type="HGNC" id="HGNC:25965">
    <property type="gene designation" value="LRRC49"/>
</dbReference>
<dbReference type="HPA" id="ENSG00000137821">
    <property type="expression patterns" value="Tissue enhanced (epididymis, heart muscle)"/>
</dbReference>
<dbReference type="MIM" id="620497">
    <property type="type" value="gene"/>
</dbReference>
<dbReference type="neXtProt" id="NX_Q8IUZ0"/>
<dbReference type="OpenTargets" id="ENSG00000137821"/>
<dbReference type="PharmGKB" id="PA142671509"/>
<dbReference type="VEuPathDB" id="HostDB:ENSG00000137821"/>
<dbReference type="eggNOG" id="KOG0531">
    <property type="taxonomic scope" value="Eukaryota"/>
</dbReference>
<dbReference type="GeneTree" id="ENSGT00940000157011"/>
<dbReference type="HOGENOM" id="CLU_019309_0_0_1"/>
<dbReference type="InParanoid" id="Q8IUZ0"/>
<dbReference type="OMA" id="FRINKDQ"/>
<dbReference type="OrthoDB" id="1939344at2759"/>
<dbReference type="PAN-GO" id="Q8IUZ0">
    <property type="GO annotations" value="2 GO annotations based on evolutionary models"/>
</dbReference>
<dbReference type="PhylomeDB" id="Q8IUZ0"/>
<dbReference type="TreeFam" id="TF324815"/>
<dbReference type="PathwayCommons" id="Q8IUZ0"/>
<dbReference type="Reactome" id="R-HSA-8955332">
    <property type="pathway name" value="Carboxyterminal post-translational modifications of tubulin"/>
</dbReference>
<dbReference type="SignaLink" id="Q8IUZ0"/>
<dbReference type="BioGRID-ORCS" id="54839">
    <property type="hits" value="11 hits in 1148 CRISPR screens"/>
</dbReference>
<dbReference type="ChiTaRS" id="LRRC49">
    <property type="organism name" value="human"/>
</dbReference>
<dbReference type="GenomeRNAi" id="54839"/>
<dbReference type="Pharos" id="Q8IUZ0">
    <property type="development level" value="Tdark"/>
</dbReference>
<dbReference type="PRO" id="PR:Q8IUZ0"/>
<dbReference type="Proteomes" id="UP000005640">
    <property type="component" value="Chromosome 15"/>
</dbReference>
<dbReference type="RNAct" id="Q8IUZ0">
    <property type="molecule type" value="protein"/>
</dbReference>
<dbReference type="Bgee" id="ENSG00000137821">
    <property type="expression patterns" value="Expressed in cortical plate and 165 other cell types or tissues"/>
</dbReference>
<dbReference type="ExpressionAtlas" id="Q8IUZ0">
    <property type="expression patterns" value="baseline and differential"/>
</dbReference>
<dbReference type="GO" id="GO:0034451">
    <property type="term" value="C:centriolar satellite"/>
    <property type="evidence" value="ECO:0000314"/>
    <property type="project" value="UniProtKB"/>
</dbReference>
<dbReference type="GO" id="GO:0005737">
    <property type="term" value="C:cytoplasm"/>
    <property type="evidence" value="ECO:0007669"/>
    <property type="project" value="UniProtKB-KW"/>
</dbReference>
<dbReference type="GO" id="GO:0005874">
    <property type="term" value="C:microtubule"/>
    <property type="evidence" value="ECO:0007669"/>
    <property type="project" value="UniProtKB-KW"/>
</dbReference>
<dbReference type="FunFam" id="3.80.10.10:FF:000272">
    <property type="entry name" value="Leucine rich repeat containing 49"/>
    <property type="match status" value="1"/>
</dbReference>
<dbReference type="FunFam" id="3.80.10.10:FF:000323">
    <property type="entry name" value="Leucine-rich repeat-containing protein 49 isoform 1"/>
    <property type="match status" value="1"/>
</dbReference>
<dbReference type="Gene3D" id="3.80.10.10">
    <property type="entry name" value="Ribonuclease Inhibitor"/>
    <property type="match status" value="2"/>
</dbReference>
<dbReference type="InterPro" id="IPR050576">
    <property type="entry name" value="Cilia_flagella_integrity"/>
</dbReference>
<dbReference type="InterPro" id="IPR001611">
    <property type="entry name" value="Leu-rich_rpt"/>
</dbReference>
<dbReference type="InterPro" id="IPR025875">
    <property type="entry name" value="Leu-rich_rpt_4"/>
</dbReference>
<dbReference type="InterPro" id="IPR003591">
    <property type="entry name" value="Leu-rich_rpt_typical-subtyp"/>
</dbReference>
<dbReference type="InterPro" id="IPR032675">
    <property type="entry name" value="LRR_dom_sf"/>
</dbReference>
<dbReference type="PANTHER" id="PTHR45973:SF8">
    <property type="entry name" value="LEUCINE-RICH REPEAT-CONTAINING PROTEIN 49"/>
    <property type="match status" value="1"/>
</dbReference>
<dbReference type="PANTHER" id="PTHR45973">
    <property type="entry name" value="PROTEIN PHOSPHATASE 1 REGULATORY SUBUNIT SDS22-RELATED"/>
    <property type="match status" value="1"/>
</dbReference>
<dbReference type="Pfam" id="PF12799">
    <property type="entry name" value="LRR_4"/>
    <property type="match status" value="1"/>
</dbReference>
<dbReference type="Pfam" id="PF14580">
    <property type="entry name" value="LRR_9"/>
    <property type="match status" value="1"/>
</dbReference>
<dbReference type="SMART" id="SM00365">
    <property type="entry name" value="LRR_SD22"/>
    <property type="match status" value="7"/>
</dbReference>
<dbReference type="SMART" id="SM00369">
    <property type="entry name" value="LRR_TYP"/>
    <property type="match status" value="5"/>
</dbReference>
<dbReference type="SUPFAM" id="SSF52058">
    <property type="entry name" value="L domain-like"/>
    <property type="match status" value="1"/>
</dbReference>
<dbReference type="PROSITE" id="PS51450">
    <property type="entry name" value="LRR"/>
    <property type="match status" value="7"/>
</dbReference>
<accession>Q8IUZ0</accession>
<accession>B3KVX1</accession>
<accession>B7Z366</accession>
<accession>F5H1J4</accession>
<accession>G5E9T5</accession>
<accession>H0YLN4</accession>
<accession>Q9NXM6</accession>
<name>LRC49_HUMAN</name>
<protein>
    <recommendedName>
        <fullName>Leucine-rich repeat-containing protein 49</fullName>
    </recommendedName>
    <alternativeName>
        <fullName evidence="6">Centriolar satellite-associated tubulin polyglutamylase complex regulator 2</fullName>
    </alternativeName>
    <alternativeName>
        <fullName>Tubulin polyglutamylase complex subunit 4</fullName>
        <shortName>PGs4</shortName>
    </alternativeName>
</protein>
<reference key="1">
    <citation type="journal article" date="2004" name="Nat. Genet.">
        <title>Complete sequencing and characterization of 21,243 full-length human cDNAs.</title>
        <authorList>
            <person name="Ota T."/>
            <person name="Suzuki Y."/>
            <person name="Nishikawa T."/>
            <person name="Otsuki T."/>
            <person name="Sugiyama T."/>
            <person name="Irie R."/>
            <person name="Wakamatsu A."/>
            <person name="Hayashi K."/>
            <person name="Sato H."/>
            <person name="Nagai K."/>
            <person name="Kimura K."/>
            <person name="Makita H."/>
            <person name="Sekine M."/>
            <person name="Obayashi M."/>
            <person name="Nishi T."/>
            <person name="Shibahara T."/>
            <person name="Tanaka T."/>
            <person name="Ishii S."/>
            <person name="Yamamoto J."/>
            <person name="Saito K."/>
            <person name="Kawai Y."/>
            <person name="Isono Y."/>
            <person name="Nakamura Y."/>
            <person name="Nagahari K."/>
            <person name="Murakami K."/>
            <person name="Yasuda T."/>
            <person name="Iwayanagi T."/>
            <person name="Wagatsuma M."/>
            <person name="Shiratori A."/>
            <person name="Sudo H."/>
            <person name="Hosoiri T."/>
            <person name="Kaku Y."/>
            <person name="Kodaira H."/>
            <person name="Kondo H."/>
            <person name="Sugawara M."/>
            <person name="Takahashi M."/>
            <person name="Kanda K."/>
            <person name="Yokoi T."/>
            <person name="Furuya T."/>
            <person name="Kikkawa E."/>
            <person name="Omura Y."/>
            <person name="Abe K."/>
            <person name="Kamihara K."/>
            <person name="Katsuta N."/>
            <person name="Sato K."/>
            <person name="Tanikawa M."/>
            <person name="Yamazaki M."/>
            <person name="Ninomiya K."/>
            <person name="Ishibashi T."/>
            <person name="Yamashita H."/>
            <person name="Murakawa K."/>
            <person name="Fujimori K."/>
            <person name="Tanai H."/>
            <person name="Kimata M."/>
            <person name="Watanabe M."/>
            <person name="Hiraoka S."/>
            <person name="Chiba Y."/>
            <person name="Ishida S."/>
            <person name="Ono Y."/>
            <person name="Takiguchi S."/>
            <person name="Watanabe S."/>
            <person name="Yosida M."/>
            <person name="Hotuta T."/>
            <person name="Kusano J."/>
            <person name="Kanehori K."/>
            <person name="Takahashi-Fujii A."/>
            <person name="Hara H."/>
            <person name="Tanase T.-O."/>
            <person name="Nomura Y."/>
            <person name="Togiya S."/>
            <person name="Komai F."/>
            <person name="Hara R."/>
            <person name="Takeuchi K."/>
            <person name="Arita M."/>
            <person name="Imose N."/>
            <person name="Musashino K."/>
            <person name="Yuuki H."/>
            <person name="Oshima A."/>
            <person name="Sasaki N."/>
            <person name="Aotsuka S."/>
            <person name="Yoshikawa Y."/>
            <person name="Matsunawa H."/>
            <person name="Ichihara T."/>
            <person name="Shiohata N."/>
            <person name="Sano S."/>
            <person name="Moriya S."/>
            <person name="Momiyama H."/>
            <person name="Satoh N."/>
            <person name="Takami S."/>
            <person name="Terashima Y."/>
            <person name="Suzuki O."/>
            <person name="Nakagawa S."/>
            <person name="Senoh A."/>
            <person name="Mizoguchi H."/>
            <person name="Goto Y."/>
            <person name="Shimizu F."/>
            <person name="Wakebe H."/>
            <person name="Hishigaki H."/>
            <person name="Watanabe T."/>
            <person name="Sugiyama A."/>
            <person name="Takemoto M."/>
            <person name="Kawakami B."/>
            <person name="Yamazaki M."/>
            <person name="Watanabe K."/>
            <person name="Kumagai A."/>
            <person name="Itakura S."/>
            <person name="Fukuzumi Y."/>
            <person name="Fujimori Y."/>
            <person name="Komiyama M."/>
            <person name="Tashiro H."/>
            <person name="Tanigami A."/>
            <person name="Fujiwara T."/>
            <person name="Ono T."/>
            <person name="Yamada K."/>
            <person name="Fujii Y."/>
            <person name="Ozaki K."/>
            <person name="Hirao M."/>
            <person name="Ohmori Y."/>
            <person name="Kawabata A."/>
            <person name="Hikiji T."/>
            <person name="Kobatake N."/>
            <person name="Inagaki H."/>
            <person name="Ikema Y."/>
            <person name="Okamoto S."/>
            <person name="Okitani R."/>
            <person name="Kawakami T."/>
            <person name="Noguchi S."/>
            <person name="Itoh T."/>
            <person name="Shigeta K."/>
            <person name="Senba T."/>
            <person name="Matsumura K."/>
            <person name="Nakajima Y."/>
            <person name="Mizuno T."/>
            <person name="Morinaga M."/>
            <person name="Sasaki M."/>
            <person name="Togashi T."/>
            <person name="Oyama M."/>
            <person name="Hata H."/>
            <person name="Watanabe M."/>
            <person name="Komatsu T."/>
            <person name="Mizushima-Sugano J."/>
            <person name="Satoh T."/>
            <person name="Shirai Y."/>
            <person name="Takahashi Y."/>
            <person name="Nakagawa K."/>
            <person name="Okumura K."/>
            <person name="Nagase T."/>
            <person name="Nomura N."/>
            <person name="Kikuchi H."/>
            <person name="Masuho Y."/>
            <person name="Yamashita R."/>
            <person name="Nakai K."/>
            <person name="Yada T."/>
            <person name="Nakamura Y."/>
            <person name="Ohara O."/>
            <person name="Isogai T."/>
            <person name="Sugano S."/>
        </authorList>
    </citation>
    <scope>NUCLEOTIDE SEQUENCE [LARGE SCALE MRNA] (ISOFORMS 1; 2 AND 4)</scope>
    <source>
        <tissue>Colon</tissue>
        <tissue>Hippocampus</tissue>
    </source>
</reference>
<reference key="2">
    <citation type="journal article" date="2006" name="Nature">
        <title>Analysis of the DNA sequence and duplication history of human chromosome 15.</title>
        <authorList>
            <person name="Zody M.C."/>
            <person name="Garber M."/>
            <person name="Sharpe T."/>
            <person name="Young S.K."/>
            <person name="Rowen L."/>
            <person name="O'Neill K."/>
            <person name="Whittaker C.A."/>
            <person name="Kamal M."/>
            <person name="Chang J.L."/>
            <person name="Cuomo C.A."/>
            <person name="Dewar K."/>
            <person name="FitzGerald M.G."/>
            <person name="Kodira C.D."/>
            <person name="Madan A."/>
            <person name="Qin S."/>
            <person name="Yang X."/>
            <person name="Abbasi N."/>
            <person name="Abouelleil A."/>
            <person name="Arachchi H.M."/>
            <person name="Baradarani L."/>
            <person name="Birditt B."/>
            <person name="Bloom S."/>
            <person name="Bloom T."/>
            <person name="Borowsky M.L."/>
            <person name="Burke J."/>
            <person name="Butler J."/>
            <person name="Cook A."/>
            <person name="DeArellano K."/>
            <person name="DeCaprio D."/>
            <person name="Dorris L. III"/>
            <person name="Dors M."/>
            <person name="Eichler E.E."/>
            <person name="Engels R."/>
            <person name="Fahey J."/>
            <person name="Fleetwood P."/>
            <person name="Friedman C."/>
            <person name="Gearin G."/>
            <person name="Hall J.L."/>
            <person name="Hensley G."/>
            <person name="Johnson E."/>
            <person name="Jones C."/>
            <person name="Kamat A."/>
            <person name="Kaur A."/>
            <person name="Locke D.P."/>
            <person name="Madan A."/>
            <person name="Munson G."/>
            <person name="Jaffe D.B."/>
            <person name="Lui A."/>
            <person name="Macdonald P."/>
            <person name="Mauceli E."/>
            <person name="Naylor J.W."/>
            <person name="Nesbitt R."/>
            <person name="Nicol R."/>
            <person name="O'Leary S.B."/>
            <person name="Ratcliffe A."/>
            <person name="Rounsley S."/>
            <person name="She X."/>
            <person name="Sneddon K.M.B."/>
            <person name="Stewart S."/>
            <person name="Sougnez C."/>
            <person name="Stone S.M."/>
            <person name="Topham K."/>
            <person name="Vincent D."/>
            <person name="Wang S."/>
            <person name="Zimmer A.R."/>
            <person name="Birren B.W."/>
            <person name="Hood L."/>
            <person name="Lander E.S."/>
            <person name="Nusbaum C."/>
        </authorList>
    </citation>
    <scope>NUCLEOTIDE SEQUENCE [LARGE SCALE GENOMIC DNA]</scope>
</reference>
<reference key="3">
    <citation type="submission" date="2005-07" db="EMBL/GenBank/DDBJ databases">
        <authorList>
            <person name="Mural R.J."/>
            <person name="Istrail S."/>
            <person name="Sutton G.G."/>
            <person name="Florea L."/>
            <person name="Halpern A.L."/>
            <person name="Mobarry C.M."/>
            <person name="Lippert R."/>
            <person name="Walenz B."/>
            <person name="Shatkay H."/>
            <person name="Dew I."/>
            <person name="Miller J.R."/>
            <person name="Flanigan M.J."/>
            <person name="Edwards N.J."/>
            <person name="Bolanos R."/>
            <person name="Fasulo D."/>
            <person name="Halldorsson B.V."/>
            <person name="Hannenhalli S."/>
            <person name="Turner R."/>
            <person name="Yooseph S."/>
            <person name="Lu F."/>
            <person name="Nusskern D.R."/>
            <person name="Shue B.C."/>
            <person name="Zheng X.H."/>
            <person name="Zhong F."/>
            <person name="Delcher A.L."/>
            <person name="Huson D.H."/>
            <person name="Kravitz S.A."/>
            <person name="Mouchard L."/>
            <person name="Reinert K."/>
            <person name="Remington K.A."/>
            <person name="Clark A.G."/>
            <person name="Waterman M.S."/>
            <person name="Eichler E.E."/>
            <person name="Adams M.D."/>
            <person name="Hunkapiller M.W."/>
            <person name="Myers E.W."/>
            <person name="Venter J.C."/>
        </authorList>
    </citation>
    <scope>NUCLEOTIDE SEQUENCE [LARGE SCALE GENOMIC DNA]</scope>
</reference>
<reference key="4">
    <citation type="journal article" date="2004" name="Genome Res.">
        <title>The status, quality, and expansion of the NIH full-length cDNA project: the Mammalian Gene Collection (MGC).</title>
        <authorList>
            <consortium name="The MGC Project Team"/>
        </authorList>
    </citation>
    <scope>NUCLEOTIDE SEQUENCE [LARGE SCALE MRNA] (ISOFORM 1)</scope>
    <source>
        <tissue>Brain</tissue>
    </source>
</reference>
<reference key="5">
    <citation type="journal article" date="2022" name="Cell Res.">
        <title>Regulators of tubulin polyglutamylation control nuclear shape and cilium disassembly by balancing microtubule and actin assembly.</title>
        <authorList>
            <person name="Wang L."/>
            <person name="Paudyal S.C."/>
            <person name="Kang Y."/>
            <person name="Owa M."/>
            <person name="Liang F.X."/>
            <person name="Spektor A."/>
            <person name="Knaut H."/>
            <person name="Sanchez I."/>
            <person name="Dynlacht B.D."/>
        </authorList>
    </citation>
    <scope>FUNCTION</scope>
    <scope>INTERACTION WITH PCM1; TTLL1; TPGS1; TPGS2 AND LRRC49</scope>
    <scope>SUBCELLULAR LOCATION</scope>
</reference>
<organism>
    <name type="scientific">Homo sapiens</name>
    <name type="common">Human</name>
    <dbReference type="NCBI Taxonomy" id="9606"/>
    <lineage>
        <taxon>Eukaryota</taxon>
        <taxon>Metazoa</taxon>
        <taxon>Chordata</taxon>
        <taxon>Craniata</taxon>
        <taxon>Vertebrata</taxon>
        <taxon>Euteleostomi</taxon>
        <taxon>Mammalia</taxon>
        <taxon>Eutheria</taxon>
        <taxon>Euarchontoglires</taxon>
        <taxon>Primates</taxon>
        <taxon>Haplorrhini</taxon>
        <taxon>Catarrhini</taxon>
        <taxon>Hominidae</taxon>
        <taxon>Homo</taxon>
    </lineage>
</organism>
<sequence>MIPGKYRSVSGRAANNVNCGLHLVIQTSSLPEKNKVEFKLNKDTSSFPGRLLQHDLERNYSSRQGDHINLVSSSLSSFPILQRSSEEKILYSDRLSLERQKLTVCPIINGEDHLRLLNFQHNFITRIQNISNLQKLISLDLYDNQIEEISGLSTLRCLRVLLLGKNRIKKISNLENLKSLDVLDLHGNQITKIENINHLCELRVLNLARNFLSHVDNLNGLDSLTELNLRHNQITFVRDVDNLPCLQHLFLSFNNISSFDSVSCLADSSSLSDITFDGNPIAQESWYKHTVLQNMMQLRQLDMKRITEEERRMASVLAKKEEEKKRESHKQSLLKEKKRLTINNVARQWDLQQQRVANIATNEDRKDSDSPQDPCQIDGSTLSAFPEETGPLDSGLNNALQGLSVIDTYLVEVDGDTLSLYGSGALESLDRNWSVQTAGMITTVSFTFIEFDEIVQVLPKLKIKFPNSLHLKFKETNLVMLQQFNALAQLRRIDQLTIDPQGNPVVNFTLWKYYVLFRLSHFSMQKINGTEVTQNDMIMAERLFGILAHVASSELPQYRLISILGDARKKQFRYLLESKGKKPGIINEENNDSKRLVGENTNRATLNYTTRDFYNEKLEEIKEKKKFCKTYIEDLVKEATEINMKNEALQKLWPQMFIELVRDAVIEIRNKNSYMKLCLQQITDQK</sequence>
<keyword id="KW-0025">Alternative splicing</keyword>
<keyword id="KW-0175">Coiled coil</keyword>
<keyword id="KW-0963">Cytoplasm</keyword>
<keyword id="KW-0206">Cytoskeleton</keyword>
<keyword id="KW-0433">Leucine-rich repeat</keyword>
<keyword id="KW-0493">Microtubule</keyword>
<keyword id="KW-1267">Proteomics identification</keyword>
<keyword id="KW-1185">Reference proteome</keyword>
<keyword id="KW-0677">Repeat</keyword>